<comment type="function">
    <text>Antimicrobial peptide which inhibits the growth of a variety of fungi, oomycetes, Gram-positive bacterial phytopatogenes and S.cerevisiae in vitro. No activity against E.coli.</text>
</comment>
<comment type="subcellular location">
    <subcellularLocation>
        <location>Secreted</location>
    </subcellularLocation>
</comment>
<comment type="miscellaneous">
    <text>Its antimicrobial activity is diminished by calcium and potassium chloride salts.</text>
</comment>
<accession>P80915</accession>
<accession>O04396</accession>
<proteinExistence type="evidence at protein level"/>
<keyword id="KW-0002">3D-structure</keyword>
<keyword id="KW-0044">Antibiotic</keyword>
<keyword id="KW-0929">Antimicrobial</keyword>
<keyword id="KW-0903">Direct protein sequencing</keyword>
<keyword id="KW-1015">Disulfide bond</keyword>
<keyword id="KW-0295">Fungicide</keyword>
<keyword id="KW-0611">Plant defense</keyword>
<keyword id="KW-0964">Secreted</keyword>
<keyword id="KW-0732">Signal</keyword>
<protein>
    <recommendedName>
        <fullName>Antimicrobial peptide 1</fullName>
        <shortName>AMP1</shortName>
    </recommendedName>
    <alternativeName>
        <fullName>MiAMP1</fullName>
    </alternativeName>
</protein>
<sequence>MASTKLFFSVITVMMLIAMASEMVNGSAFTVWSGPGCNNRAERYSKCGCSAIHQKGGYDFSYTGQTAALYNQAGCSGVAHTRFGSSARACNPFGWKSIFIQC</sequence>
<feature type="signal peptide" evidence="1">
    <location>
        <begin position="1"/>
        <end position="26"/>
    </location>
</feature>
<feature type="chain" id="PRO_0000020709" description="Antimicrobial peptide 1">
    <location>
        <begin position="27"/>
        <end position="102"/>
    </location>
</feature>
<feature type="disulfide bond">
    <location>
        <begin position="37"/>
        <end position="90"/>
    </location>
</feature>
<feature type="disulfide bond">
    <location>
        <begin position="47"/>
        <end position="102"/>
    </location>
</feature>
<feature type="disulfide bond">
    <location>
        <begin position="49"/>
        <end position="75"/>
    </location>
</feature>
<feature type="strand" evidence="2">
    <location>
        <begin position="28"/>
        <end position="31"/>
    </location>
</feature>
<feature type="strand" evidence="2">
    <location>
        <begin position="33"/>
        <end position="39"/>
    </location>
</feature>
<feature type="strand" evidence="2">
    <location>
        <begin position="42"/>
        <end position="44"/>
    </location>
</feature>
<feature type="strand" evidence="2">
    <location>
        <begin position="46"/>
        <end position="51"/>
    </location>
</feature>
<feature type="strand" evidence="2">
    <location>
        <begin position="58"/>
        <end position="61"/>
    </location>
</feature>
<feature type="strand" evidence="2">
    <location>
        <begin position="67"/>
        <end position="72"/>
    </location>
</feature>
<feature type="helix" evidence="2">
    <location>
        <begin position="73"/>
        <end position="75"/>
    </location>
</feature>
<feature type="strand" evidence="2">
    <location>
        <begin position="79"/>
        <end position="85"/>
    </location>
</feature>
<feature type="strand" evidence="2">
    <location>
        <begin position="96"/>
        <end position="100"/>
    </location>
</feature>
<evidence type="ECO:0000269" key="1">
    <source>
    </source>
</evidence>
<evidence type="ECO:0007829" key="2">
    <source>
        <dbReference type="PDB" id="1C01"/>
    </source>
</evidence>
<name>AMP1_MACIN</name>
<dbReference type="EMBL" id="Y10903">
    <property type="protein sequence ID" value="CAA71842.1"/>
    <property type="molecule type" value="mRNA"/>
</dbReference>
<dbReference type="RefSeq" id="XP_042487763.1">
    <property type="nucleotide sequence ID" value="XM_042631829.1"/>
</dbReference>
<dbReference type="RefSeq" id="XP_042487984.1">
    <property type="nucleotide sequence ID" value="XM_042632050.1"/>
</dbReference>
<dbReference type="PDB" id="1C01">
    <property type="method" value="NMR"/>
    <property type="chains" value="A=27-102"/>
</dbReference>
<dbReference type="PDBsum" id="1C01"/>
<dbReference type="SMR" id="P80915"/>
<dbReference type="GeneID" id="122068009"/>
<dbReference type="GeneID" id="122068182"/>
<dbReference type="OMA" id="WHSIHID"/>
<dbReference type="OrthoDB" id="1846856at2759"/>
<dbReference type="EvolutionaryTrace" id="P80915"/>
<dbReference type="GO" id="GO:0005576">
    <property type="term" value="C:extracellular region"/>
    <property type="evidence" value="ECO:0007669"/>
    <property type="project" value="UniProtKB-SubCell"/>
</dbReference>
<dbReference type="GO" id="GO:0042742">
    <property type="term" value="P:defense response to bacterium"/>
    <property type="evidence" value="ECO:0007669"/>
    <property type="project" value="UniProtKB-KW"/>
</dbReference>
<dbReference type="GO" id="GO:0050832">
    <property type="term" value="P:defense response to fungus"/>
    <property type="evidence" value="ECO:0007669"/>
    <property type="project" value="UniProtKB-KW"/>
</dbReference>
<dbReference type="GO" id="GO:0031640">
    <property type="term" value="P:killing of cells of another organism"/>
    <property type="evidence" value="ECO:0007669"/>
    <property type="project" value="UniProtKB-KW"/>
</dbReference>
<dbReference type="GO" id="GO:0045926">
    <property type="term" value="P:negative regulation of growth"/>
    <property type="evidence" value="ECO:0007669"/>
    <property type="project" value="InterPro"/>
</dbReference>
<dbReference type="Gene3D" id="2.60.20.30">
    <property type="match status" value="1"/>
</dbReference>
<dbReference type="InterPro" id="IPR015791">
    <property type="entry name" value="Antimic/Inh_G_crystallin-like"/>
</dbReference>
<dbReference type="InterPro" id="IPR015201">
    <property type="entry name" value="Antimicrobial_MiAMP1"/>
</dbReference>
<dbReference type="InterPro" id="IPR011024">
    <property type="entry name" value="G_crystallin-like"/>
</dbReference>
<dbReference type="Pfam" id="PF09117">
    <property type="entry name" value="MiAMP1"/>
    <property type="match status" value="1"/>
</dbReference>
<dbReference type="SUPFAM" id="SSF49695">
    <property type="entry name" value="gamma-Crystallin-like"/>
    <property type="match status" value="1"/>
</dbReference>
<reference key="1">
    <citation type="journal article" date="1997" name="Eur. J. Biochem.">
        <title>Purification, characterisation and cDNA cloning of an antimicrobial peptide from Macadamia integrifolia.</title>
        <authorList>
            <person name="Marcus J.P."/>
            <person name="Green J.L."/>
            <person name="Goulter K.C."/>
            <person name="Harrison S.J."/>
            <person name="Manners J.M."/>
        </authorList>
    </citation>
    <scope>NUCLEOTIDE SEQUENCE [MRNA]</scope>
    <scope>PROTEIN SEQUENCE OF 27-96</scope>
    <source>
        <tissue>Seed</tissue>
    </source>
</reference>
<reference key="2">
    <citation type="journal article" date="1999" name="J. Mol. Biol.">
        <title>MiAMP1, a novel protein from Macadamia integrifolia adopts a Greek key beta-barrel fold unique amongst plant antimicrobial proteins.</title>
        <authorList>
            <person name="McManus A.M."/>
            <person name="Nielsen K.J."/>
            <person name="Marcus J.P."/>
            <person name="Harrison S.J."/>
            <person name="Green J.L."/>
            <person name="Manners J.M."/>
            <person name="Craik D.J."/>
        </authorList>
    </citation>
    <scope>STRUCTURE BY NMR OF 27-102</scope>
</reference>
<organism>
    <name type="scientific">Macadamia integrifolia</name>
    <name type="common">Macadamia nut</name>
    <dbReference type="NCBI Taxonomy" id="60698"/>
    <lineage>
        <taxon>Eukaryota</taxon>
        <taxon>Viridiplantae</taxon>
        <taxon>Streptophyta</taxon>
        <taxon>Embryophyta</taxon>
        <taxon>Tracheophyta</taxon>
        <taxon>Spermatophyta</taxon>
        <taxon>Magnoliopsida</taxon>
        <taxon>Proteales</taxon>
        <taxon>Proteaceae</taxon>
        <taxon>Macadamia</taxon>
    </lineage>
</organism>